<sequence length="698" mass="77390">MSQEKKVFKTEWAGRSLTIETGQLAKQANGAVLVRYGDTVVLSTATASKEPRDGDFFPLTVNYEEKMYAAGKIPGGFKKREGRPGDDATLTARLIDRPIRPLFPKGYKHDVQIMNMVLSADPDCSPQMAAMIGSSMALSVSDIPFQGPIAGVNVGYIDGKYIINPTVEEKEVSRLDLEVAGHKDAVNMVEAGASEITEQEMLEAIFFGHEEIQRLVDFQQQIVDHIQPVKQEFIPVERDEALVERVKSLTEEKGLKETVLTFDKQQRDENLDNLKEEIVNEFIDEEDPENELLIKEVYAILNELVKEEVRRLIADEKIRPDGRKPDEIRPLDSEVGILPRTHGSGLFTRGQTQALSVLTLGALGDYQLIDGLGPEEEKRFMHHYNFPNFSVGETGPVRAPGRREIGHGALGERALKYIIPDTADFPYTIRIVSEVLESNGSSSQASICGSTLALMDAGVPIKAPVAGIAMGLVTREDSYTILTDIQGMEDALGDMDFKVAGTKEGITAIQMDIKIDGLTREIIEEALEQARRGRLEIMNHMLQTIDQPRTELSAYAPKVVTMTIKPDKIRDVIGPGGKKINEIIDETGVKLDIEQDGTIFIGAVDQAMINRAREIIEEITREAEVGQTYQATVKRIEKYGAFVGLFPGKDALLHISQISKNRIEKVEDVLKIGDTIEVKITEIDKQGRVNASHRALEE</sequence>
<keyword id="KW-0963">Cytoplasm</keyword>
<keyword id="KW-0460">Magnesium</keyword>
<keyword id="KW-0479">Metal-binding</keyword>
<keyword id="KW-0548">Nucleotidyltransferase</keyword>
<keyword id="KW-0694">RNA-binding</keyword>
<keyword id="KW-0808">Transferase</keyword>
<gene>
    <name evidence="1" type="primary">pnp</name>
    <name type="synonym">pnpA</name>
    <name type="ordered locus">SAS1208</name>
</gene>
<accession>Q6G9T9</accession>
<protein>
    <recommendedName>
        <fullName evidence="1">Polyribonucleotide nucleotidyltransferase</fullName>
        <ecNumber evidence="1">2.7.7.8</ecNumber>
    </recommendedName>
    <alternativeName>
        <fullName evidence="1">Polynucleotide phosphorylase</fullName>
        <shortName evidence="1">PNPase</shortName>
    </alternativeName>
</protein>
<reference key="1">
    <citation type="journal article" date="2004" name="Proc. Natl. Acad. Sci. U.S.A.">
        <title>Complete genomes of two clinical Staphylococcus aureus strains: evidence for the rapid evolution of virulence and drug resistance.</title>
        <authorList>
            <person name="Holden M.T.G."/>
            <person name="Feil E.J."/>
            <person name="Lindsay J.A."/>
            <person name="Peacock S.J."/>
            <person name="Day N.P.J."/>
            <person name="Enright M.C."/>
            <person name="Foster T.J."/>
            <person name="Moore C.E."/>
            <person name="Hurst L."/>
            <person name="Atkin R."/>
            <person name="Barron A."/>
            <person name="Bason N."/>
            <person name="Bentley S.D."/>
            <person name="Chillingworth C."/>
            <person name="Chillingworth T."/>
            <person name="Churcher C."/>
            <person name="Clark L."/>
            <person name="Corton C."/>
            <person name="Cronin A."/>
            <person name="Doggett J."/>
            <person name="Dowd L."/>
            <person name="Feltwell T."/>
            <person name="Hance Z."/>
            <person name="Harris B."/>
            <person name="Hauser H."/>
            <person name="Holroyd S."/>
            <person name="Jagels K."/>
            <person name="James K.D."/>
            <person name="Lennard N."/>
            <person name="Line A."/>
            <person name="Mayes R."/>
            <person name="Moule S."/>
            <person name="Mungall K."/>
            <person name="Ormond D."/>
            <person name="Quail M.A."/>
            <person name="Rabbinowitsch E."/>
            <person name="Rutherford K.M."/>
            <person name="Sanders M."/>
            <person name="Sharp S."/>
            <person name="Simmonds M."/>
            <person name="Stevens K."/>
            <person name="Whitehead S."/>
            <person name="Barrell B.G."/>
            <person name="Spratt B.G."/>
            <person name="Parkhill J."/>
        </authorList>
    </citation>
    <scope>NUCLEOTIDE SEQUENCE [LARGE SCALE GENOMIC DNA]</scope>
    <source>
        <strain>MSSA476</strain>
    </source>
</reference>
<feature type="chain" id="PRO_0000260056" description="Polyribonucleotide nucleotidyltransferase">
    <location>
        <begin position="1"/>
        <end position="698"/>
    </location>
</feature>
<feature type="domain" description="KH" evidence="1">
    <location>
        <begin position="557"/>
        <end position="616"/>
    </location>
</feature>
<feature type="domain" description="S1 motif" evidence="1">
    <location>
        <begin position="626"/>
        <end position="694"/>
    </location>
</feature>
<feature type="binding site" evidence="1">
    <location>
        <position position="490"/>
    </location>
    <ligand>
        <name>Mg(2+)</name>
        <dbReference type="ChEBI" id="CHEBI:18420"/>
    </ligand>
</feature>
<feature type="binding site" evidence="1">
    <location>
        <position position="496"/>
    </location>
    <ligand>
        <name>Mg(2+)</name>
        <dbReference type="ChEBI" id="CHEBI:18420"/>
    </ligand>
</feature>
<comment type="function">
    <text evidence="1">Involved in mRNA degradation. Catalyzes the phosphorolysis of single-stranded polyribonucleotides processively in the 3'- to 5'-direction.</text>
</comment>
<comment type="catalytic activity">
    <reaction evidence="1">
        <text>RNA(n+1) + phosphate = RNA(n) + a ribonucleoside 5'-diphosphate</text>
        <dbReference type="Rhea" id="RHEA:22096"/>
        <dbReference type="Rhea" id="RHEA-COMP:14527"/>
        <dbReference type="Rhea" id="RHEA-COMP:17342"/>
        <dbReference type="ChEBI" id="CHEBI:43474"/>
        <dbReference type="ChEBI" id="CHEBI:57930"/>
        <dbReference type="ChEBI" id="CHEBI:140395"/>
        <dbReference type="EC" id="2.7.7.8"/>
    </reaction>
</comment>
<comment type="cofactor">
    <cofactor evidence="1">
        <name>Mg(2+)</name>
        <dbReference type="ChEBI" id="CHEBI:18420"/>
    </cofactor>
</comment>
<comment type="subcellular location">
    <subcellularLocation>
        <location evidence="1">Cytoplasm</location>
    </subcellularLocation>
</comment>
<comment type="similarity">
    <text evidence="1">Belongs to the polyribonucleotide nucleotidyltransferase family.</text>
</comment>
<proteinExistence type="inferred from homology"/>
<dbReference type="EC" id="2.7.7.8" evidence="1"/>
<dbReference type="EMBL" id="BX571857">
    <property type="protein sequence ID" value="CAG42985.1"/>
    <property type="molecule type" value="Genomic_DNA"/>
</dbReference>
<dbReference type="RefSeq" id="WP_000076693.1">
    <property type="nucleotide sequence ID" value="NC_002953.3"/>
</dbReference>
<dbReference type="SMR" id="Q6G9T9"/>
<dbReference type="KEGG" id="sas:SAS1208"/>
<dbReference type="HOGENOM" id="CLU_004217_2_2_9"/>
<dbReference type="GO" id="GO:0005829">
    <property type="term" value="C:cytosol"/>
    <property type="evidence" value="ECO:0007669"/>
    <property type="project" value="TreeGrafter"/>
</dbReference>
<dbReference type="GO" id="GO:0000175">
    <property type="term" value="F:3'-5'-RNA exonuclease activity"/>
    <property type="evidence" value="ECO:0007669"/>
    <property type="project" value="TreeGrafter"/>
</dbReference>
<dbReference type="GO" id="GO:0000287">
    <property type="term" value="F:magnesium ion binding"/>
    <property type="evidence" value="ECO:0007669"/>
    <property type="project" value="UniProtKB-UniRule"/>
</dbReference>
<dbReference type="GO" id="GO:0004654">
    <property type="term" value="F:polyribonucleotide nucleotidyltransferase activity"/>
    <property type="evidence" value="ECO:0007669"/>
    <property type="project" value="UniProtKB-UniRule"/>
</dbReference>
<dbReference type="GO" id="GO:0003723">
    <property type="term" value="F:RNA binding"/>
    <property type="evidence" value="ECO:0007669"/>
    <property type="project" value="UniProtKB-UniRule"/>
</dbReference>
<dbReference type="GO" id="GO:0006402">
    <property type="term" value="P:mRNA catabolic process"/>
    <property type="evidence" value="ECO:0007669"/>
    <property type="project" value="UniProtKB-UniRule"/>
</dbReference>
<dbReference type="GO" id="GO:0006396">
    <property type="term" value="P:RNA processing"/>
    <property type="evidence" value="ECO:0007669"/>
    <property type="project" value="InterPro"/>
</dbReference>
<dbReference type="CDD" id="cd02393">
    <property type="entry name" value="KH-I_PNPase"/>
    <property type="match status" value="1"/>
</dbReference>
<dbReference type="CDD" id="cd11363">
    <property type="entry name" value="RNase_PH_PNPase_1"/>
    <property type="match status" value="1"/>
</dbReference>
<dbReference type="CDD" id="cd11364">
    <property type="entry name" value="RNase_PH_PNPase_2"/>
    <property type="match status" value="1"/>
</dbReference>
<dbReference type="CDD" id="cd04472">
    <property type="entry name" value="S1_PNPase"/>
    <property type="match status" value="1"/>
</dbReference>
<dbReference type="FunFam" id="2.40.50.140:FF:000023">
    <property type="entry name" value="Polyribonucleotide nucleotidyltransferase"/>
    <property type="match status" value="1"/>
</dbReference>
<dbReference type="FunFam" id="3.30.1370.10:FF:000001">
    <property type="entry name" value="Polyribonucleotide nucleotidyltransferase"/>
    <property type="match status" value="1"/>
</dbReference>
<dbReference type="FunFam" id="3.30.230.70:FF:000001">
    <property type="entry name" value="Polyribonucleotide nucleotidyltransferase"/>
    <property type="match status" value="1"/>
</dbReference>
<dbReference type="FunFam" id="3.30.230.70:FF:000002">
    <property type="entry name" value="Polyribonucleotide nucleotidyltransferase"/>
    <property type="match status" value="1"/>
</dbReference>
<dbReference type="Gene3D" id="3.30.230.70">
    <property type="entry name" value="GHMP Kinase, N-terminal domain"/>
    <property type="match status" value="2"/>
</dbReference>
<dbReference type="Gene3D" id="3.30.1370.10">
    <property type="entry name" value="K Homology domain, type 1"/>
    <property type="match status" value="1"/>
</dbReference>
<dbReference type="Gene3D" id="2.40.50.140">
    <property type="entry name" value="Nucleic acid-binding proteins"/>
    <property type="match status" value="1"/>
</dbReference>
<dbReference type="HAMAP" id="MF_01595">
    <property type="entry name" value="PNPase"/>
    <property type="match status" value="1"/>
</dbReference>
<dbReference type="InterPro" id="IPR001247">
    <property type="entry name" value="ExoRNase_PH_dom1"/>
</dbReference>
<dbReference type="InterPro" id="IPR015847">
    <property type="entry name" value="ExoRNase_PH_dom2"/>
</dbReference>
<dbReference type="InterPro" id="IPR036345">
    <property type="entry name" value="ExoRNase_PH_dom2_sf"/>
</dbReference>
<dbReference type="InterPro" id="IPR004087">
    <property type="entry name" value="KH_dom"/>
</dbReference>
<dbReference type="InterPro" id="IPR004088">
    <property type="entry name" value="KH_dom_type_1"/>
</dbReference>
<dbReference type="InterPro" id="IPR036612">
    <property type="entry name" value="KH_dom_type_1_sf"/>
</dbReference>
<dbReference type="InterPro" id="IPR012340">
    <property type="entry name" value="NA-bd_OB-fold"/>
</dbReference>
<dbReference type="InterPro" id="IPR012162">
    <property type="entry name" value="PNPase"/>
</dbReference>
<dbReference type="InterPro" id="IPR027408">
    <property type="entry name" value="PNPase/RNase_PH_dom_sf"/>
</dbReference>
<dbReference type="InterPro" id="IPR015848">
    <property type="entry name" value="PNPase_PH_RNA-bd_bac/org-type"/>
</dbReference>
<dbReference type="InterPro" id="IPR036456">
    <property type="entry name" value="PNPase_PH_RNA-bd_sf"/>
</dbReference>
<dbReference type="InterPro" id="IPR020568">
    <property type="entry name" value="Ribosomal_Su5_D2-typ_SF"/>
</dbReference>
<dbReference type="InterPro" id="IPR003029">
    <property type="entry name" value="S1_domain"/>
</dbReference>
<dbReference type="NCBIfam" id="TIGR03591">
    <property type="entry name" value="polynuc_phos"/>
    <property type="match status" value="1"/>
</dbReference>
<dbReference type="NCBIfam" id="NF008805">
    <property type="entry name" value="PRK11824.1"/>
    <property type="match status" value="1"/>
</dbReference>
<dbReference type="PANTHER" id="PTHR11252">
    <property type="entry name" value="POLYRIBONUCLEOTIDE NUCLEOTIDYLTRANSFERASE"/>
    <property type="match status" value="1"/>
</dbReference>
<dbReference type="PANTHER" id="PTHR11252:SF0">
    <property type="entry name" value="POLYRIBONUCLEOTIDE NUCLEOTIDYLTRANSFERASE 1, MITOCHONDRIAL"/>
    <property type="match status" value="1"/>
</dbReference>
<dbReference type="Pfam" id="PF00013">
    <property type="entry name" value="KH_1"/>
    <property type="match status" value="1"/>
</dbReference>
<dbReference type="Pfam" id="PF03726">
    <property type="entry name" value="PNPase"/>
    <property type="match status" value="1"/>
</dbReference>
<dbReference type="Pfam" id="PF01138">
    <property type="entry name" value="RNase_PH"/>
    <property type="match status" value="2"/>
</dbReference>
<dbReference type="Pfam" id="PF03725">
    <property type="entry name" value="RNase_PH_C"/>
    <property type="match status" value="2"/>
</dbReference>
<dbReference type="Pfam" id="PF00575">
    <property type="entry name" value="S1"/>
    <property type="match status" value="1"/>
</dbReference>
<dbReference type="PIRSF" id="PIRSF005499">
    <property type="entry name" value="PNPase"/>
    <property type="match status" value="1"/>
</dbReference>
<dbReference type="SMART" id="SM00322">
    <property type="entry name" value="KH"/>
    <property type="match status" value="1"/>
</dbReference>
<dbReference type="SMART" id="SM00316">
    <property type="entry name" value="S1"/>
    <property type="match status" value="1"/>
</dbReference>
<dbReference type="SUPFAM" id="SSF54791">
    <property type="entry name" value="Eukaryotic type KH-domain (KH-domain type I)"/>
    <property type="match status" value="1"/>
</dbReference>
<dbReference type="SUPFAM" id="SSF50249">
    <property type="entry name" value="Nucleic acid-binding proteins"/>
    <property type="match status" value="1"/>
</dbReference>
<dbReference type="SUPFAM" id="SSF46915">
    <property type="entry name" value="Polynucleotide phosphorylase/guanosine pentaphosphate synthase (PNPase/GPSI), domain 3"/>
    <property type="match status" value="1"/>
</dbReference>
<dbReference type="SUPFAM" id="SSF55666">
    <property type="entry name" value="Ribonuclease PH domain 2-like"/>
    <property type="match status" value="2"/>
</dbReference>
<dbReference type="SUPFAM" id="SSF54211">
    <property type="entry name" value="Ribosomal protein S5 domain 2-like"/>
    <property type="match status" value="2"/>
</dbReference>
<dbReference type="PROSITE" id="PS50084">
    <property type="entry name" value="KH_TYPE_1"/>
    <property type="match status" value="1"/>
</dbReference>
<dbReference type="PROSITE" id="PS50126">
    <property type="entry name" value="S1"/>
    <property type="match status" value="1"/>
</dbReference>
<evidence type="ECO:0000255" key="1">
    <source>
        <dbReference type="HAMAP-Rule" id="MF_01595"/>
    </source>
</evidence>
<organism>
    <name type="scientific">Staphylococcus aureus (strain MSSA476)</name>
    <dbReference type="NCBI Taxonomy" id="282459"/>
    <lineage>
        <taxon>Bacteria</taxon>
        <taxon>Bacillati</taxon>
        <taxon>Bacillota</taxon>
        <taxon>Bacilli</taxon>
        <taxon>Bacillales</taxon>
        <taxon>Staphylococcaceae</taxon>
        <taxon>Staphylococcus</taxon>
    </lineage>
</organism>
<name>PNP_STAAS</name>